<organism>
    <name type="scientific">Gallus gallus</name>
    <name type="common">Chicken</name>
    <dbReference type="NCBI Taxonomy" id="9031"/>
    <lineage>
        <taxon>Eukaryota</taxon>
        <taxon>Metazoa</taxon>
        <taxon>Chordata</taxon>
        <taxon>Craniata</taxon>
        <taxon>Vertebrata</taxon>
        <taxon>Euteleostomi</taxon>
        <taxon>Archelosauria</taxon>
        <taxon>Archosauria</taxon>
        <taxon>Dinosauria</taxon>
        <taxon>Saurischia</taxon>
        <taxon>Theropoda</taxon>
        <taxon>Coelurosauria</taxon>
        <taxon>Aves</taxon>
        <taxon>Neognathae</taxon>
        <taxon>Galloanserae</taxon>
        <taxon>Galliformes</taxon>
        <taxon>Phasianidae</taxon>
        <taxon>Phasianinae</taxon>
        <taxon>Gallus</taxon>
    </lineage>
</organism>
<accession>P53411</accession>
<dbReference type="EMBL" id="L35569">
    <property type="protein sequence ID" value="AAA62173.1"/>
    <property type="molecule type" value="mRNA"/>
</dbReference>
<dbReference type="PIR" id="I50375">
    <property type="entry name" value="I50375"/>
</dbReference>
<dbReference type="RefSeq" id="NP_990744.1">
    <property type="nucleotide sequence ID" value="NM_205413.1"/>
</dbReference>
<dbReference type="SMR" id="P53411"/>
<dbReference type="FunCoup" id="P53411">
    <property type="interactions" value="7"/>
</dbReference>
<dbReference type="STRING" id="9031.ENSGALP00000008672"/>
<dbReference type="PaxDb" id="9031-ENSGALP00000008672"/>
<dbReference type="KEGG" id="gga:396381"/>
<dbReference type="VEuPathDB" id="HostDB:geneid_396381"/>
<dbReference type="eggNOG" id="KOG0490">
    <property type="taxonomic scope" value="Eukaryota"/>
</dbReference>
<dbReference type="InParanoid" id="P53411"/>
<dbReference type="OrthoDB" id="10068367at2759"/>
<dbReference type="PhylomeDB" id="P53411"/>
<dbReference type="PRO" id="PR:P53411"/>
<dbReference type="Proteomes" id="UP000000539">
    <property type="component" value="Unassembled WGS sequence"/>
</dbReference>
<dbReference type="GO" id="GO:0005654">
    <property type="term" value="C:nucleoplasm"/>
    <property type="evidence" value="ECO:0000304"/>
    <property type="project" value="Reactome"/>
</dbReference>
<dbReference type="GO" id="GO:0005634">
    <property type="term" value="C:nucleus"/>
    <property type="evidence" value="ECO:0000314"/>
    <property type="project" value="AgBase"/>
</dbReference>
<dbReference type="GO" id="GO:0032991">
    <property type="term" value="C:protein-containing complex"/>
    <property type="evidence" value="ECO:0000250"/>
    <property type="project" value="UniProtKB"/>
</dbReference>
<dbReference type="GO" id="GO:0003700">
    <property type="term" value="F:DNA-binding transcription factor activity"/>
    <property type="evidence" value="ECO:0000250"/>
    <property type="project" value="UniProtKB"/>
</dbReference>
<dbReference type="GO" id="GO:0000981">
    <property type="term" value="F:DNA-binding transcription factor activity, RNA polymerase II-specific"/>
    <property type="evidence" value="ECO:0000318"/>
    <property type="project" value="GO_Central"/>
</dbReference>
<dbReference type="GO" id="GO:0000977">
    <property type="term" value="F:RNA polymerase II transcription regulatory region sequence-specific DNA binding"/>
    <property type="evidence" value="ECO:0000318"/>
    <property type="project" value="GO_Central"/>
</dbReference>
<dbReference type="GO" id="GO:0008270">
    <property type="term" value="F:zinc ion binding"/>
    <property type="evidence" value="ECO:0007669"/>
    <property type="project" value="InterPro"/>
</dbReference>
<dbReference type="GO" id="GO:0048646">
    <property type="term" value="P:anatomical structure formation involved in morphogenesis"/>
    <property type="evidence" value="ECO:0000250"/>
    <property type="project" value="UniProtKB"/>
</dbReference>
<dbReference type="GO" id="GO:0009653">
    <property type="term" value="P:anatomical structure morphogenesis"/>
    <property type="evidence" value="ECO:0000250"/>
    <property type="project" value="UniProtKB"/>
</dbReference>
<dbReference type="GO" id="GO:0009948">
    <property type="term" value="P:anterior/posterior axis specification"/>
    <property type="evidence" value="ECO:0000250"/>
    <property type="project" value="UniProtKB"/>
</dbReference>
<dbReference type="GO" id="GO:0009952">
    <property type="term" value="P:anterior/posterior pattern specification"/>
    <property type="evidence" value="ECO:0000250"/>
    <property type="project" value="UniProtKB"/>
</dbReference>
<dbReference type="GO" id="GO:0007267">
    <property type="term" value="P:cell-cell signaling"/>
    <property type="evidence" value="ECO:0000250"/>
    <property type="project" value="UniProtKB"/>
</dbReference>
<dbReference type="GO" id="GO:0021702">
    <property type="term" value="P:cerebellar Purkinje cell differentiation"/>
    <property type="evidence" value="ECO:0000250"/>
    <property type="project" value="UniProtKB"/>
</dbReference>
<dbReference type="GO" id="GO:0021937">
    <property type="term" value="P:cerebellar Purkinje cell-granule cell precursor cell signaling"/>
    <property type="evidence" value="ECO:0000250"/>
    <property type="project" value="UniProtKB"/>
</dbReference>
<dbReference type="GO" id="GO:0021549">
    <property type="term" value="P:cerebellum development"/>
    <property type="evidence" value="ECO:0000250"/>
    <property type="project" value="UniProtKB"/>
</dbReference>
<dbReference type="GO" id="GO:0072049">
    <property type="term" value="P:comma-shaped body morphogenesis"/>
    <property type="evidence" value="ECO:0000250"/>
    <property type="project" value="UniProtKB"/>
</dbReference>
<dbReference type="GO" id="GO:0097379">
    <property type="term" value="P:dorsal spinal cord interneuron posterior axon guidance"/>
    <property type="evidence" value="ECO:0000314"/>
    <property type="project" value="UniProtKB"/>
</dbReference>
<dbReference type="GO" id="GO:0009953">
    <property type="term" value="P:dorsal/ventral pattern formation"/>
    <property type="evidence" value="ECO:0000250"/>
    <property type="project" value="UniProtKB"/>
</dbReference>
<dbReference type="GO" id="GO:0001705">
    <property type="term" value="P:ectoderm formation"/>
    <property type="evidence" value="ECO:0000250"/>
    <property type="project" value="UniProtKB"/>
</dbReference>
<dbReference type="GO" id="GO:0009880">
    <property type="term" value="P:embryonic pattern specification"/>
    <property type="evidence" value="ECO:0000250"/>
    <property type="project" value="UniProtKB"/>
</dbReference>
<dbReference type="GO" id="GO:0060059">
    <property type="term" value="P:embryonic retina morphogenesis in camera-type eye"/>
    <property type="evidence" value="ECO:0000250"/>
    <property type="project" value="UniProtKB"/>
</dbReference>
<dbReference type="GO" id="GO:0048703">
    <property type="term" value="P:embryonic viscerocranium morphogenesis"/>
    <property type="evidence" value="ECO:0000250"/>
    <property type="project" value="UniProtKB"/>
</dbReference>
<dbReference type="GO" id="GO:0001706">
    <property type="term" value="P:endoderm formation"/>
    <property type="evidence" value="ECO:0000250"/>
    <property type="project" value="UniProtKB"/>
</dbReference>
<dbReference type="GO" id="GO:0060429">
    <property type="term" value="P:epithelium development"/>
    <property type="evidence" value="ECO:0000250"/>
    <property type="project" value="UniProtKB"/>
</dbReference>
<dbReference type="GO" id="GO:0021871">
    <property type="term" value="P:forebrain regionalization"/>
    <property type="evidence" value="ECO:0000250"/>
    <property type="project" value="UniProtKB"/>
</dbReference>
<dbReference type="GO" id="GO:0001702">
    <property type="term" value="P:gastrulation with mouth forming second"/>
    <property type="evidence" value="ECO:0000250"/>
    <property type="project" value="UniProtKB"/>
</dbReference>
<dbReference type="GO" id="GO:0060322">
    <property type="term" value="P:head development"/>
    <property type="evidence" value="ECO:0000250"/>
    <property type="project" value="UniProtKB"/>
</dbReference>
<dbReference type="GO" id="GO:0001822">
    <property type="term" value="P:kidney development"/>
    <property type="evidence" value="ECO:0000250"/>
    <property type="project" value="UniProtKB"/>
</dbReference>
<dbReference type="GO" id="GO:0060993">
    <property type="term" value="P:kidney morphogenesis"/>
    <property type="evidence" value="ECO:0000303"/>
    <property type="project" value="AgBase"/>
</dbReference>
<dbReference type="GO" id="GO:0097477">
    <property type="term" value="P:lateral motor column neuron migration"/>
    <property type="evidence" value="ECO:0000250"/>
    <property type="project" value="UniProtKB"/>
</dbReference>
<dbReference type="GO" id="GO:0045892">
    <property type="term" value="P:negative regulation of DNA-templated transcription"/>
    <property type="evidence" value="ECO:0000314"/>
    <property type="project" value="UniProtKB"/>
</dbReference>
<dbReference type="GO" id="GO:0072179">
    <property type="term" value="P:nephric duct formation"/>
    <property type="evidence" value="ECO:0000303"/>
    <property type="project" value="AgBase"/>
</dbReference>
<dbReference type="GO" id="GO:0072178">
    <property type="term" value="P:nephric duct morphogenesis"/>
    <property type="evidence" value="ECO:0000250"/>
    <property type="project" value="UniProtKB"/>
</dbReference>
<dbReference type="GO" id="GO:0030182">
    <property type="term" value="P:neuron differentiation"/>
    <property type="evidence" value="ECO:0000318"/>
    <property type="project" value="GO_Central"/>
</dbReference>
<dbReference type="GO" id="GO:0061205">
    <property type="term" value="P:paramesonephric duct development"/>
    <property type="evidence" value="ECO:0000250"/>
    <property type="project" value="UniProtKB"/>
</dbReference>
<dbReference type="GO" id="GO:0007389">
    <property type="term" value="P:pattern specification process"/>
    <property type="evidence" value="ECO:0000250"/>
    <property type="project" value="UniProtKB"/>
</dbReference>
<dbReference type="GO" id="GO:2000744">
    <property type="term" value="P:positive regulation of anterior head development"/>
    <property type="evidence" value="ECO:0000250"/>
    <property type="project" value="UniProtKB"/>
</dbReference>
<dbReference type="GO" id="GO:0090190">
    <property type="term" value="P:positive regulation of branching involved in ureteric bud morphogenesis"/>
    <property type="evidence" value="ECO:0000250"/>
    <property type="project" value="UniProtKB"/>
</dbReference>
<dbReference type="GO" id="GO:0045893">
    <property type="term" value="P:positive regulation of DNA-templated transcription"/>
    <property type="evidence" value="ECO:0000250"/>
    <property type="project" value="UniProtKB"/>
</dbReference>
<dbReference type="GO" id="GO:0040019">
    <property type="term" value="P:positive regulation of embryonic development"/>
    <property type="evidence" value="ECO:0000250"/>
    <property type="project" value="UniProtKB"/>
</dbReference>
<dbReference type="GO" id="GO:2000543">
    <property type="term" value="P:positive regulation of gastrulation"/>
    <property type="evidence" value="ECO:0000250"/>
    <property type="project" value="UniProtKB"/>
</dbReference>
<dbReference type="GO" id="GO:2000768">
    <property type="term" value="P:positive regulation of nephron tubule epithelial cell differentiation"/>
    <property type="evidence" value="ECO:0000250"/>
    <property type="project" value="UniProtKB"/>
</dbReference>
<dbReference type="GO" id="GO:0009791">
    <property type="term" value="P:post-embryonic development"/>
    <property type="evidence" value="ECO:0000250"/>
    <property type="project" value="UniProtKB"/>
</dbReference>
<dbReference type="GO" id="GO:0090009">
    <property type="term" value="P:primitive streak formation"/>
    <property type="evidence" value="ECO:0000250"/>
    <property type="project" value="UniProtKB"/>
</dbReference>
<dbReference type="GO" id="GO:0010468">
    <property type="term" value="P:regulation of gene expression"/>
    <property type="evidence" value="ECO:0000250"/>
    <property type="project" value="UniProtKB"/>
</dbReference>
<dbReference type="GO" id="GO:2001141">
    <property type="term" value="P:regulation of RNA biosynthetic process"/>
    <property type="evidence" value="ECO:0000303"/>
    <property type="project" value="AgBase"/>
</dbReference>
<dbReference type="GO" id="GO:0006357">
    <property type="term" value="P:regulation of transcription by RNA polymerase II"/>
    <property type="evidence" value="ECO:0000318"/>
    <property type="project" value="GO_Central"/>
</dbReference>
<dbReference type="GO" id="GO:0072077">
    <property type="term" value="P:renal vesicle morphogenesis"/>
    <property type="evidence" value="ECO:0000250"/>
    <property type="project" value="UniProtKB"/>
</dbReference>
<dbReference type="GO" id="GO:0032526">
    <property type="term" value="P:response to retinoic acid"/>
    <property type="evidence" value="ECO:0000314"/>
    <property type="project" value="AgBase"/>
</dbReference>
<dbReference type="GO" id="GO:0010842">
    <property type="term" value="P:retina layer formation"/>
    <property type="evidence" value="ECO:0000250"/>
    <property type="project" value="UniProtKB"/>
</dbReference>
<dbReference type="GO" id="GO:0072050">
    <property type="term" value="P:S-shaped body morphogenesis"/>
    <property type="evidence" value="ECO:0000250"/>
    <property type="project" value="UniProtKB"/>
</dbReference>
<dbReference type="GO" id="GO:0021527">
    <property type="term" value="P:spinal cord association neuron differentiation"/>
    <property type="evidence" value="ECO:0000250"/>
    <property type="project" value="UniProtKB"/>
</dbReference>
<dbReference type="GO" id="GO:0021522">
    <property type="term" value="P:spinal cord motor neuron differentiation"/>
    <property type="evidence" value="ECO:0000270"/>
    <property type="project" value="UniProtKB"/>
</dbReference>
<dbReference type="GO" id="GO:0006366">
    <property type="term" value="P:transcription by RNA polymerase II"/>
    <property type="evidence" value="ECO:0000250"/>
    <property type="project" value="UniProtKB"/>
</dbReference>
<dbReference type="GO" id="GO:0001657">
    <property type="term" value="P:ureteric bud development"/>
    <property type="evidence" value="ECO:0000250"/>
    <property type="project" value="UniProtKB"/>
</dbReference>
<dbReference type="GO" id="GO:0001655">
    <property type="term" value="P:urogenital system development"/>
    <property type="evidence" value="ECO:0000250"/>
    <property type="project" value="UniProtKB"/>
</dbReference>
<dbReference type="GO" id="GO:0021517">
    <property type="term" value="P:ventral spinal cord development"/>
    <property type="evidence" value="ECO:0000270"/>
    <property type="project" value="UniProtKB"/>
</dbReference>
<dbReference type="CDD" id="cd00086">
    <property type="entry name" value="homeodomain"/>
    <property type="match status" value="1"/>
</dbReference>
<dbReference type="CDD" id="cd09367">
    <property type="entry name" value="LIM1_Lhx1_Lhx5"/>
    <property type="match status" value="1"/>
</dbReference>
<dbReference type="CDD" id="cd09375">
    <property type="entry name" value="LIM2_Lhx1_Lhx5"/>
    <property type="match status" value="1"/>
</dbReference>
<dbReference type="FunFam" id="2.10.110.10:FF:000120">
    <property type="entry name" value="Insulin gene enhancer protein ISL-2"/>
    <property type="match status" value="1"/>
</dbReference>
<dbReference type="FunFam" id="1.10.10.60:FF:000075">
    <property type="entry name" value="LIM/homeobox protein Lhx1"/>
    <property type="match status" value="1"/>
</dbReference>
<dbReference type="FunFam" id="2.10.110.10:FF:000046">
    <property type="entry name" value="LIM/homeobox protein Lhx1"/>
    <property type="match status" value="1"/>
</dbReference>
<dbReference type="Gene3D" id="2.10.110.10">
    <property type="entry name" value="Cysteine Rich Protein"/>
    <property type="match status" value="2"/>
</dbReference>
<dbReference type="Gene3D" id="1.10.10.60">
    <property type="entry name" value="Homeodomain-like"/>
    <property type="match status" value="1"/>
</dbReference>
<dbReference type="InterPro" id="IPR001356">
    <property type="entry name" value="HD"/>
</dbReference>
<dbReference type="InterPro" id="IPR017970">
    <property type="entry name" value="Homeobox_CS"/>
</dbReference>
<dbReference type="InterPro" id="IPR009057">
    <property type="entry name" value="Homeodomain-like_sf"/>
</dbReference>
<dbReference type="InterPro" id="IPR049618">
    <property type="entry name" value="Lhx1/5_LIM1"/>
</dbReference>
<dbReference type="InterPro" id="IPR049619">
    <property type="entry name" value="Lhx1/5_LIM2"/>
</dbReference>
<dbReference type="InterPro" id="IPR050453">
    <property type="entry name" value="LIM_Homeobox_TF"/>
</dbReference>
<dbReference type="InterPro" id="IPR001781">
    <property type="entry name" value="Znf_LIM"/>
</dbReference>
<dbReference type="PANTHER" id="PTHR24208">
    <property type="entry name" value="LIM/HOMEOBOX PROTEIN LHX"/>
    <property type="match status" value="1"/>
</dbReference>
<dbReference type="PANTHER" id="PTHR24208:SF106">
    <property type="entry name" value="LIM_HOMEOBOX PROTEIN LHX1"/>
    <property type="match status" value="1"/>
</dbReference>
<dbReference type="Pfam" id="PF00046">
    <property type="entry name" value="Homeodomain"/>
    <property type="match status" value="1"/>
</dbReference>
<dbReference type="Pfam" id="PF00412">
    <property type="entry name" value="LIM"/>
    <property type="match status" value="2"/>
</dbReference>
<dbReference type="SMART" id="SM00389">
    <property type="entry name" value="HOX"/>
    <property type="match status" value="1"/>
</dbReference>
<dbReference type="SMART" id="SM00132">
    <property type="entry name" value="LIM"/>
    <property type="match status" value="2"/>
</dbReference>
<dbReference type="SUPFAM" id="SSF57716">
    <property type="entry name" value="Glucocorticoid receptor-like (DNA-binding domain)"/>
    <property type="match status" value="2"/>
</dbReference>
<dbReference type="SUPFAM" id="SSF46689">
    <property type="entry name" value="Homeodomain-like"/>
    <property type="match status" value="1"/>
</dbReference>
<dbReference type="PROSITE" id="PS00027">
    <property type="entry name" value="HOMEOBOX_1"/>
    <property type="match status" value="1"/>
</dbReference>
<dbReference type="PROSITE" id="PS50071">
    <property type="entry name" value="HOMEOBOX_2"/>
    <property type="match status" value="1"/>
</dbReference>
<dbReference type="PROSITE" id="PS00478">
    <property type="entry name" value="LIM_DOMAIN_1"/>
    <property type="match status" value="2"/>
</dbReference>
<dbReference type="PROSITE" id="PS50023">
    <property type="entry name" value="LIM_DOMAIN_2"/>
    <property type="match status" value="2"/>
</dbReference>
<evidence type="ECO:0000250" key="1"/>
<evidence type="ECO:0000255" key="2">
    <source>
        <dbReference type="PROSITE-ProRule" id="PRU00108"/>
    </source>
</evidence>
<evidence type="ECO:0000255" key="3">
    <source>
        <dbReference type="PROSITE-ProRule" id="PRU00125"/>
    </source>
</evidence>
<evidence type="ECO:0000256" key="4">
    <source>
        <dbReference type="SAM" id="MobiDB-lite"/>
    </source>
</evidence>
<evidence type="ECO:0000269" key="5">
    <source>
    </source>
</evidence>
<evidence type="ECO:0000305" key="6"/>
<sequence length="406" mass="44845">MVHCAGCKRPILDRFLLNVLDRAWHVKCVQCCECKCNLTEKCFSREGKLYCKNDFFRCFGTKCAGCAQGISPSDLVRRARSKVFHLNCFTCMMCNKQLSTGEELYIIDENKFVCKEDYLNNSNTAKENSLHSATTGSDPSLSPDSQDPSQDDAKDSESANVSDKETGSNENDDQNLGAKRRGPRTTIKAKQLETLKAAFAATPKPTRHIREQLAQETGLNMRVIQVWFQNRRSKERRMKQLSALGARRHAFFRSPRRMRPLVDRLEPGELLPNGPFSFYGDYQSEYYGPGANYEFFPQGPPSSQAQTPVELPFGAAGGPPGTPLGALEHPLPGHHPPGEAQRFPDMLAHPAGDSPSPEPTLPGSLHSMSAEVFGPSPPFSSISVNGGANYGNHLSHPPEMNEAAVW</sequence>
<feature type="chain" id="PRO_0000075775" description="LIM/homeobox protein Lhx1">
    <location>
        <begin position="1"/>
        <end position="406"/>
    </location>
</feature>
<feature type="domain" description="LIM zinc-binding 1" evidence="3">
    <location>
        <begin position="4"/>
        <end position="54"/>
    </location>
</feature>
<feature type="domain" description="LIM zinc-binding 2" evidence="3">
    <location>
        <begin position="63"/>
        <end position="117"/>
    </location>
</feature>
<feature type="DNA-binding region" description="Homeobox" evidence="2">
    <location>
        <begin position="180"/>
        <end position="239"/>
    </location>
</feature>
<feature type="region of interest" description="Disordered" evidence="4">
    <location>
        <begin position="125"/>
        <end position="187"/>
    </location>
</feature>
<feature type="region of interest" description="Disordered" evidence="4">
    <location>
        <begin position="296"/>
        <end position="372"/>
    </location>
</feature>
<feature type="compositionally biased region" description="Polar residues" evidence="4">
    <location>
        <begin position="125"/>
        <end position="136"/>
    </location>
</feature>
<feature type="compositionally biased region" description="Low complexity" evidence="4">
    <location>
        <begin position="137"/>
        <end position="148"/>
    </location>
</feature>
<feature type="compositionally biased region" description="Basic and acidic residues" evidence="4">
    <location>
        <begin position="151"/>
        <end position="167"/>
    </location>
</feature>
<reference key="1">
    <citation type="journal article" date="1994" name="Cell">
        <title>Topographic organization of embryonic motor neurons defined by expression of LIM homeobox genes.</title>
        <authorList>
            <person name="Tsuchida T."/>
            <person name="Ensini M."/>
            <person name="Morton S.B."/>
            <person name="Baldassare M."/>
            <person name="Edlund T."/>
            <person name="Jessell T.M."/>
            <person name="Pfaff S.L."/>
        </authorList>
    </citation>
    <scope>NUCLEOTIDE SEQUENCE [MRNA]</scope>
    <scope>FUNCTION</scope>
    <scope>DEVELOPMENTAL STAGE</scope>
    <source>
        <tissue>Brain</tissue>
    </source>
</reference>
<proteinExistence type="evidence at transcript level"/>
<name>LHX1_CHICK</name>
<gene>
    <name type="primary">LHX1</name>
    <name type="synonym">LIM-1</name>
    <name type="synonym">LIM1</name>
</gene>
<comment type="function">
    <text evidence="5">Transcriptional factor that defines subclasses of motoneurons that segregate into columns in the spinal cord and select distinct axon pathways. Acts in conjunction with ISL-2.</text>
</comment>
<comment type="subcellular location">
    <subcellularLocation>
        <location evidence="6">Nucleus</location>
    </subcellularLocation>
</comment>
<comment type="developmental stage">
    <text evidence="5">Expressed prior to the formation of distinct motor axon pathways and before the segregation of motor neurons into columns. Expression is confined to the motor neurons in the lateral subdivision of the lateral motor column (LMC).</text>
</comment>
<comment type="domain">
    <text evidence="1">The LIM domains exert a negative regulatory function and disruption of the LIM domains produces an activated form. In addition, two activation domains and a negative regulatory domain exist C-terminally to the homeobox (By similarity).</text>
</comment>
<keyword id="KW-0238">DNA-binding</keyword>
<keyword id="KW-0371">Homeobox</keyword>
<keyword id="KW-0440">LIM domain</keyword>
<keyword id="KW-0479">Metal-binding</keyword>
<keyword id="KW-0539">Nucleus</keyword>
<keyword id="KW-1185">Reference proteome</keyword>
<keyword id="KW-0677">Repeat</keyword>
<keyword id="KW-0862">Zinc</keyword>
<protein>
    <recommendedName>
        <fullName>LIM/homeobox protein Lhx1</fullName>
        <shortName>LIM homeobox protein 1</shortName>
    </recommendedName>
    <alternativeName>
        <fullName>Homeobox protein Lim-1</fullName>
    </alternativeName>
</protein>